<accession>Q3Z962</accession>
<evidence type="ECO:0000255" key="1">
    <source>
        <dbReference type="HAMAP-Rule" id="MF_01341"/>
    </source>
</evidence>
<evidence type="ECO:0000256" key="2">
    <source>
        <dbReference type="SAM" id="MobiDB-lite"/>
    </source>
</evidence>
<evidence type="ECO:0000305" key="3"/>
<keyword id="KW-0687">Ribonucleoprotein</keyword>
<keyword id="KW-0689">Ribosomal protein</keyword>
<keyword id="KW-0694">RNA-binding</keyword>
<keyword id="KW-0699">rRNA-binding</keyword>
<dbReference type="EMBL" id="CP000027">
    <property type="protein sequence ID" value="AAW40273.1"/>
    <property type="molecule type" value="Genomic_DNA"/>
</dbReference>
<dbReference type="RefSeq" id="WP_010936270.1">
    <property type="nucleotide sequence ID" value="NC_002936.3"/>
</dbReference>
<dbReference type="SMR" id="Q3Z962"/>
<dbReference type="FunCoup" id="Q3Z962">
    <property type="interactions" value="374"/>
</dbReference>
<dbReference type="STRING" id="243164.DET0493"/>
<dbReference type="GeneID" id="3230237"/>
<dbReference type="KEGG" id="det:DET0493"/>
<dbReference type="eggNOG" id="COG0200">
    <property type="taxonomic scope" value="Bacteria"/>
</dbReference>
<dbReference type="HOGENOM" id="CLU_055188_4_2_0"/>
<dbReference type="InParanoid" id="Q3Z962"/>
<dbReference type="Proteomes" id="UP000008289">
    <property type="component" value="Chromosome"/>
</dbReference>
<dbReference type="GO" id="GO:0022625">
    <property type="term" value="C:cytosolic large ribosomal subunit"/>
    <property type="evidence" value="ECO:0007669"/>
    <property type="project" value="TreeGrafter"/>
</dbReference>
<dbReference type="GO" id="GO:0019843">
    <property type="term" value="F:rRNA binding"/>
    <property type="evidence" value="ECO:0007669"/>
    <property type="project" value="UniProtKB-UniRule"/>
</dbReference>
<dbReference type="GO" id="GO:0003735">
    <property type="term" value="F:structural constituent of ribosome"/>
    <property type="evidence" value="ECO:0007669"/>
    <property type="project" value="InterPro"/>
</dbReference>
<dbReference type="GO" id="GO:0006412">
    <property type="term" value="P:translation"/>
    <property type="evidence" value="ECO:0007669"/>
    <property type="project" value="UniProtKB-UniRule"/>
</dbReference>
<dbReference type="Gene3D" id="3.100.10.10">
    <property type="match status" value="1"/>
</dbReference>
<dbReference type="HAMAP" id="MF_01341">
    <property type="entry name" value="Ribosomal_uL15"/>
    <property type="match status" value="1"/>
</dbReference>
<dbReference type="InterPro" id="IPR030878">
    <property type="entry name" value="Ribosomal_uL15"/>
</dbReference>
<dbReference type="InterPro" id="IPR021131">
    <property type="entry name" value="Ribosomal_uL15/eL18"/>
</dbReference>
<dbReference type="InterPro" id="IPR036227">
    <property type="entry name" value="Ribosomal_uL15/eL18_sf"/>
</dbReference>
<dbReference type="InterPro" id="IPR005749">
    <property type="entry name" value="Ribosomal_uL15_bac-type"/>
</dbReference>
<dbReference type="InterPro" id="IPR001196">
    <property type="entry name" value="Ribosomal_uL15_CS"/>
</dbReference>
<dbReference type="NCBIfam" id="TIGR01071">
    <property type="entry name" value="rplO_bact"/>
    <property type="match status" value="1"/>
</dbReference>
<dbReference type="PANTHER" id="PTHR12934">
    <property type="entry name" value="50S RIBOSOMAL PROTEIN L15"/>
    <property type="match status" value="1"/>
</dbReference>
<dbReference type="PANTHER" id="PTHR12934:SF11">
    <property type="entry name" value="LARGE RIBOSOMAL SUBUNIT PROTEIN UL15M"/>
    <property type="match status" value="1"/>
</dbReference>
<dbReference type="Pfam" id="PF00828">
    <property type="entry name" value="Ribosomal_L27A"/>
    <property type="match status" value="1"/>
</dbReference>
<dbReference type="SUPFAM" id="SSF52080">
    <property type="entry name" value="Ribosomal proteins L15p and L18e"/>
    <property type="match status" value="1"/>
</dbReference>
<dbReference type="PROSITE" id="PS00475">
    <property type="entry name" value="RIBOSOMAL_L15"/>
    <property type="match status" value="1"/>
</dbReference>
<feature type="chain" id="PRO_0000104714" description="Large ribosomal subunit protein uL15">
    <location>
        <begin position="1"/>
        <end position="153"/>
    </location>
</feature>
<feature type="region of interest" description="Disordered" evidence="2">
    <location>
        <begin position="1"/>
        <end position="48"/>
    </location>
</feature>
<name>RL15_DEHM1</name>
<proteinExistence type="inferred from homology"/>
<reference key="1">
    <citation type="journal article" date="2005" name="Science">
        <title>Genome sequence of the PCE-dechlorinating bacterium Dehalococcoides ethenogenes.</title>
        <authorList>
            <person name="Seshadri R."/>
            <person name="Adrian L."/>
            <person name="Fouts D.E."/>
            <person name="Eisen J.A."/>
            <person name="Phillippy A.M."/>
            <person name="Methe B.A."/>
            <person name="Ward N.L."/>
            <person name="Nelson W.C."/>
            <person name="DeBoy R.T."/>
            <person name="Khouri H.M."/>
            <person name="Kolonay J.F."/>
            <person name="Dodson R.J."/>
            <person name="Daugherty S.C."/>
            <person name="Brinkac L.M."/>
            <person name="Sullivan S.A."/>
            <person name="Madupu R."/>
            <person name="Nelson K.E."/>
            <person name="Kang K.H."/>
            <person name="Impraim M."/>
            <person name="Tran K."/>
            <person name="Robinson J.M."/>
            <person name="Forberger H.A."/>
            <person name="Fraser C.M."/>
            <person name="Zinder S.H."/>
            <person name="Heidelberg J.F."/>
        </authorList>
    </citation>
    <scope>NUCLEOTIDE SEQUENCE [LARGE SCALE GENOMIC DNA]</scope>
    <source>
        <strain>ATCC BAA-2266 / KCTC 15142 / 195</strain>
    </source>
</reference>
<organism>
    <name type="scientific">Dehalococcoides mccartyi (strain ATCC BAA-2266 / KCTC 15142 / 195)</name>
    <name type="common">Dehalococcoides ethenogenes (strain 195)</name>
    <dbReference type="NCBI Taxonomy" id="243164"/>
    <lineage>
        <taxon>Bacteria</taxon>
        <taxon>Bacillati</taxon>
        <taxon>Chloroflexota</taxon>
        <taxon>Dehalococcoidia</taxon>
        <taxon>Dehalococcoidales</taxon>
        <taxon>Dehalococcoidaceae</taxon>
        <taxon>Dehalococcoides</taxon>
    </lineage>
</organism>
<protein>
    <recommendedName>
        <fullName evidence="1">Large ribosomal subunit protein uL15</fullName>
    </recommendedName>
    <alternativeName>
        <fullName evidence="3">50S ribosomal protein L15</fullName>
    </alternativeName>
</protein>
<gene>
    <name evidence="1" type="primary">rplO</name>
    <name type="ordered locus">DET0493</name>
</gene>
<sequence length="153" mass="16653">MRLNELSPAPGSKKDRKRVGRGDAGRGNYSGRGMKGQKARSGGATRPGFEGGQLPIYLRLPRKRGFFNPFRIEYTVVNIEQLNIFEAGTEVTPETMLAAGLIRNFVKPVKILAAGHIDRALEVSAHKFSQAAKAQIEAAGGKVQEIDYAAEIE</sequence>
<comment type="function">
    <text evidence="1">Binds to the 23S rRNA.</text>
</comment>
<comment type="subunit">
    <text evidence="1">Part of the 50S ribosomal subunit.</text>
</comment>
<comment type="similarity">
    <text evidence="1">Belongs to the universal ribosomal protein uL15 family.</text>
</comment>